<evidence type="ECO:0000250" key="1">
    <source>
        <dbReference type="UniProtKB" id="Q6BWA5"/>
    </source>
</evidence>
<evidence type="ECO:0000255" key="2"/>
<evidence type="ECO:0000269" key="3">
    <source>
    </source>
</evidence>
<evidence type="ECO:0000303" key="4">
    <source>
    </source>
</evidence>
<evidence type="ECO:0000305" key="5"/>
<reference evidence="5" key="1">
    <citation type="journal article" date="2006" name="Biochem. J.">
        <title>A novel subfamily of monomeric inorganic pyrophosphatases in photosynthetic eukaryotes.</title>
        <authorList>
            <person name="Gomez-Garcia M.R."/>
            <person name="Losada M."/>
            <person name="Serrano A."/>
        </authorList>
    </citation>
    <scope>PROTEIN SEQUENCE</scope>
    <scope>CATALYTIC ACTIVITY</scope>
    <scope>BIOPHYSICOCHEMICAL PROPERTIES</scope>
    <scope>SUBUNIT</scope>
    <scope>MASS SPECTROMETRY</scope>
    <source>
        <strain evidence="3">UTEX LB 555 / Pringsheim</strain>
    </source>
</reference>
<dbReference type="EC" id="3.6.1.1"/>
<dbReference type="SABIO-RK" id="P80887"/>
<dbReference type="GO" id="GO:0004427">
    <property type="term" value="F:inorganic diphosphate phosphatase activity"/>
    <property type="evidence" value="ECO:0007669"/>
    <property type="project" value="UniProtKB-EC"/>
</dbReference>
<dbReference type="GO" id="GO:0046872">
    <property type="term" value="F:metal ion binding"/>
    <property type="evidence" value="ECO:0007669"/>
    <property type="project" value="UniProtKB-KW"/>
</dbReference>
<comment type="catalytic activity">
    <reaction evidence="3">
        <text>diphosphate + H2O = 2 phosphate + H(+)</text>
        <dbReference type="Rhea" id="RHEA:24576"/>
        <dbReference type="ChEBI" id="CHEBI:15377"/>
        <dbReference type="ChEBI" id="CHEBI:15378"/>
        <dbReference type="ChEBI" id="CHEBI:33019"/>
        <dbReference type="ChEBI" id="CHEBI:43474"/>
        <dbReference type="EC" id="3.6.1.1"/>
    </reaction>
</comment>
<comment type="cofactor">
    <cofactor evidence="1">
        <name>Mg(2+)</name>
        <dbReference type="ChEBI" id="CHEBI:18420"/>
    </cofactor>
</comment>
<comment type="biophysicochemical properties">
    <kinetics>
        <KM evidence="3">32.4 uM for Mg2-PPi</KM>
    </kinetics>
</comment>
<comment type="subunit">
    <text evidence="3">Monomer.</text>
</comment>
<comment type="mass spectrometry"/>
<comment type="similarity">
    <text evidence="2">Belongs to the PPase family.</text>
</comment>
<feature type="chain" id="PRO_0000253940" description="Inorganic pyrophosphatase">
    <location>
        <begin position="1"/>
        <end position="25" status="greater than"/>
    </location>
</feature>
<feature type="non-terminal residue" evidence="4">
    <location>
        <position position="25"/>
    </location>
</feature>
<accession>P80887</accession>
<protein>
    <recommendedName>
        <fullName>Inorganic pyrophosphatase</fullName>
        <ecNumber>3.6.1.1</ecNumber>
    </recommendedName>
    <alternativeName>
        <fullName>Pyrophosphate phospho-hydrolase</fullName>
        <shortName>PPase</shortName>
    </alternativeName>
</protein>
<sequence>XAITAEPVGTPETLEYRVFIQKDGK</sequence>
<keyword id="KW-0903">Direct protein sequencing</keyword>
<keyword id="KW-0378">Hydrolase</keyword>
<keyword id="KW-0460">Magnesium</keyword>
<keyword id="KW-0479">Metal-binding</keyword>
<proteinExistence type="evidence at protein level"/>
<name>IPYR_CYAPA</name>
<organism>
    <name type="scientific">Cyanophora paradoxa</name>
    <dbReference type="NCBI Taxonomy" id="2762"/>
    <lineage>
        <taxon>Eukaryota</taxon>
        <taxon>Glaucocystophyceae</taxon>
        <taxon>Cyanophoraceae</taxon>
        <taxon>Cyanophora</taxon>
    </lineage>
</organism>